<organism>
    <name type="scientific">Danio rerio</name>
    <name type="common">Zebrafish</name>
    <name type="synonym">Brachydanio rerio</name>
    <dbReference type="NCBI Taxonomy" id="7955"/>
    <lineage>
        <taxon>Eukaryota</taxon>
        <taxon>Metazoa</taxon>
        <taxon>Chordata</taxon>
        <taxon>Craniata</taxon>
        <taxon>Vertebrata</taxon>
        <taxon>Euteleostomi</taxon>
        <taxon>Actinopterygii</taxon>
        <taxon>Neopterygii</taxon>
        <taxon>Teleostei</taxon>
        <taxon>Ostariophysi</taxon>
        <taxon>Cypriniformes</taxon>
        <taxon>Danionidae</taxon>
        <taxon>Danioninae</taxon>
        <taxon>Danio</taxon>
    </lineage>
</organism>
<gene>
    <name type="primary">rnf213b</name>
</gene>
<name>R213B_DANRE</name>
<proteinExistence type="inferred from homology"/>
<evidence type="ECO:0000250" key="1">
    <source>
        <dbReference type="UniProtKB" id="A0A0R4IBK5"/>
    </source>
</evidence>
<evidence type="ECO:0000250" key="2">
    <source>
        <dbReference type="UniProtKB" id="E9Q555"/>
    </source>
</evidence>
<evidence type="ECO:0000250" key="3">
    <source>
        <dbReference type="UniProtKB" id="Q63HN8"/>
    </source>
</evidence>
<evidence type="ECO:0000255" key="4">
    <source>
        <dbReference type="PROSITE-ProRule" id="PRU00175"/>
    </source>
</evidence>
<evidence type="ECO:0000255" key="5">
    <source>
        <dbReference type="PROSITE-ProRule" id="PRU01325"/>
    </source>
</evidence>
<evidence type="ECO:0000256" key="6">
    <source>
        <dbReference type="SAM" id="MobiDB-lite"/>
    </source>
</evidence>
<evidence type="ECO:0000269" key="7">
    <source>
    </source>
</evidence>
<evidence type="ECO:0000269" key="8">
    <source>
    </source>
</evidence>
<evidence type="ECO:0000303" key="9">
    <source>
    </source>
</evidence>
<evidence type="ECO:0000303" key="10">
    <source>
    </source>
</evidence>
<evidence type="ECO:0000305" key="11"/>
<comment type="function">
    <text evidence="1 3">Atypical E3 ubiquitin ligase that can catalyze ubiquitination of both proteins and lipids, and which is involved in various processes, such as lipid metabolism, angiogenesis and cell-autonomous immunity. Acts as a key immune sensor by catalyzing ubiquitination of the lipid A moiety of bacterial lipopolysaccharide (LPS) via its RZ-type zinc-finger: restricts the proliferation of cytosolic bacteria, such as Salmonella, by generating the bacterial ubiquitin coat through the ubiquitination of LPS. Ubiquitination of LPS triggers cell-autonomous immunity, such as antibacterial autophagy, leading to degradation of the microbial invader (By similarity). Involved in lipid metabolism by regulating fat storage and lipid droplet formation; act by inhibiting the lipolytic process (By similarity). Also regulates lipotoxicity by inhibiting desaturation of fatty acids. Also acts as an E3 ubiquitin-protein ligase via its RING-type zinc finger. Involved in the non-canonical Wnt signaling pathway in vascular development: acts by mediating ubiquitination and degradation of proteins downstream of rspo3, leading to inhibit the non-canonical Wnt signaling pathway and promoting vessel regression. Also has ATPase activity; ATPase activity is required for ubiquitination of LPS (By similarity).</text>
</comment>
<comment type="catalytic activity">
    <reaction evidence="3">
        <text>S-ubiquitinyl-[E2 ubiquitin-conjugating enzyme]-L-cysteine + [acceptor protein]-L-lysine = [E2 ubiquitin-conjugating enzyme]-L-cysteine + N(6)-ubiquitinyl-[acceptor protein]-L-lysine.</text>
        <dbReference type="EC" id="2.3.2.27"/>
    </reaction>
</comment>
<comment type="catalytic activity">
    <reaction evidence="3">
        <text>ATP + H2O = ADP + phosphate + H(+)</text>
        <dbReference type="Rhea" id="RHEA:13065"/>
        <dbReference type="ChEBI" id="CHEBI:15377"/>
        <dbReference type="ChEBI" id="CHEBI:15378"/>
        <dbReference type="ChEBI" id="CHEBI:30616"/>
        <dbReference type="ChEBI" id="CHEBI:43474"/>
        <dbReference type="ChEBI" id="CHEBI:456216"/>
    </reaction>
    <physiologicalReaction direction="left-to-right" evidence="3">
        <dbReference type="Rhea" id="RHEA:13066"/>
    </physiologicalReaction>
</comment>
<comment type="pathway">
    <text evidence="3">Protein modification; protein ubiquitination.</text>
</comment>
<comment type="subcellular location">
    <subcellularLocation>
        <location evidence="3">Cytoplasm</location>
        <location evidence="3">Cytosol</location>
    </subcellularLocation>
    <subcellularLocation>
        <location evidence="3">Lipid droplet</location>
    </subcellularLocation>
</comment>
<comment type="domain">
    <text evidence="2">Composed of an N-terminal stalk, a dynein-like core comprised of two catalytically active and four inactive ATPase domains, and a C-terminal E3 module. The ATPase regions do not generate movement but rather act like an intricate molecular 'switch'.</text>
</comment>
<comment type="domain">
    <text evidence="3">The RING-type zinc finger domain is required for the ubiquitin-protein ligase activity.</text>
</comment>
<comment type="domain">
    <text evidence="3">The RZ-type (RNF213-ZNFX1) zinc-finger is required for the ubiquitination of the lipid A moiety of bacterial lipopolysaccharide (LPS).</text>
</comment>
<comment type="disruption phenotype">
    <text evidence="7 8">No visible phenotype (PubMed:21799892, PubMed:26530008). No vascular phenotype (PubMed:21799892, PubMed:26530008).</text>
</comment>
<comment type="similarity">
    <text evidence="11">Belongs to the AAA ATPase family.</text>
</comment>
<sequence length="5061" mass="577550">MTRKRKSGKKGKPLAQKKEAQKRGGSTSSSTTQKEGAQKGDGSSSSSTTQKDGAQKRDDSTSSSSTAQKEEGQKSDGSTSSSTTNKEGAQKRDGSTSSRLQKKGPQKRKGSTSSSRAHSRSRSKSKQTSYPSQARSRSHGQHNISTTESGPLSKEAQTQTSASLLVDKDTQTETVGQASQQTQTEINGNTETAEVSQPPQLSHEDVEMEGTVQPRTKGSESDGEKEESVKRKKRKLSEIGEPAKETEDSTKLSHECEEKVGDNQKNEDTNKHYGGDSLKDLKSVTEEPKSYAAAAATGKTGKVSKEQTNQIEANQDSTMESKSTQRKPSPVRAPAGPPMLTFYIYAVLDKRFRFNEQYDSLFLDYGNGNIKLQMKHFNIGKDGYLIEATFSVEDSAVRGGTIQYKYVVQQRQNQKSEIAVRYIEVPSYTTEKEFHLYEGYISCSSTVSITEWMMSLFHSEQKAVYKGWETSAHVLLDRIFLKWHPSNEESNMTFVQHLRSYKNAFESGFVEFPGNYTPFPIKVSELISAKLRMILKKESEALRTSESLDGVKSEALSVALSVFKVCCGCDVDLSLKDWGKLCQVVSECMGSFGEIQTTQTAPFINTVTGLMNLCAKKLITEVVLLVPVLHLLRNSEVNEAGPGSSMDEQRWTGLENISYQSFRERIRGLPDKRRMILKLIKDNLPMTKDNPKLLKSWLSLVAFEDVSEFVQLTGSFPELLIQSLMCRIIEAEKNTDANRTEKNLEVTGKVLNLLLKSIKKDRERIMKTEQLKLILQCCCNVHKSVCKTARLVPQYKVTVLSFQLLLKMAEIVYDGFFKGGEQMKQHQNEVLSKLNIIQEDFRKWRVELLLKPLMQTTGFTYPREMELWNDLYGIESSIPGVTERWKGFLDHDLRRRISQISDTDKIVVYVLVTSAKAVENSHANIQSCLKELCEAAIKNQCQSKKEGTLLCHLFSKTISWPVLSSIIVESAACFGEDHKGRLLDPQSAINFFLSQDKWNEWKLEDGASQLIAESQSFLGRLIQTLCQGSIPLGHLKTIFKYKTQFQKLYNQYKNNNKEMNVSISVSDLLSQREDDLKAFEQQKGYMTNLINMLGKISDVINVPELSSLEEIAKTNVQEVALDKLVEVETYFSKDDLKKNNTRRVLFYSDDQQVQDMAREMHDVNSSNLILSFWQEKAKDYFMAGPELLSLDLTEIYEDIWTPCLTKFLNFGNRIAVGQACFKEVEEALVGCGETGEGDRLKKEFMLMATMLDGHNENWPEQRLKQIREYRCLYDAAESAEVILKLKDRLGLQGDFSHIHSLTLVRDDSFKQNTLGSLSEDLIKARQKLADVERRHTACLEAFLKSDTLIKWIKAEIPSLKELKVFMELATISAGENDADIDRLASFETAVMGYAPLLYSLPQNVGFEEFFDYAKQVLDTLNKDEKLGDKLVDSNRWLDWLKGLRETHGSVEQSSLSLASAINTGGVYHVGWPDDFNGKTGLDNIFYVKVTKNNEEKTYRLNELLELQNKLMLMSSKGEKGKEQVIKFTQVFEGIQRMGRILLQLHRSGNMLFRNWAAEITCNHQNQPCIQVKFPLLSKCIVYQGEVEEELQKLSRSLEDFHKDWCNHLTKMRSQYYPLNHYSSEQIVYLCEWINSINIKKKPVPQQVWHLLTPIKPDCMLNDIKEAFEIATEPQSILQEDTAEELGPNSDFDLPLSFSLLDVSTECLEDLWKQFKENMSGFLTHHVDVETLGRFLSNLSNMNQLHIKRKIPSFLQEGRPNLVQCPAAELMSTTLSFYMESPENPLPTTDEVLMCQEETTEEEVEIFLRRCLGGAASNHKKIYTLVNPGSMSYDVSVALVEYFETQEVCAGPYYRLVMVCPVNQDRYIPSFFSNYKVQTGITISAERSQKYIRHHFKISYELATHSSVYPERLSVWMIASKRPAVGKSLYVRRLFEKFKGEFPRATLLTIRLIDPYIDMDGFVQTLSERLAPLRQQDPVLLHIDVAAVCHGLEEFLFKLLILECISDSKGTIWRRNKAHLVVIETLQRGHKTQTKMEPSHGFLNTLPTIFCRPPKDIKEIMKTNESFRSLDPLMDKEEFESEDIQRPYQYLRRFNRSMNLDRFTYQAHSVEGDPVDCLHHLLSNYGLKDPSWAELKHFTWFLNLQLKDCEKSLFCDSDFCGETLSGFKDFIVKFMIHMARDFASPSIDISDQSPSFFSKNEDEEEILSFRKRWENESHPYIFFNADHVSMSFLGFHVKQNGTILNAVDSKSGKVLMRNVMTQELFSDIQRQMINLSKDFDDLTREDKLQKMSFVVGAEKGCEKGKFDPDPTYELTTDNVMKMLAIHMRFRCEIPVIIMGETGCGKTRLVRFLCDLQREGRDVENMKLVKVHGGTTSETIYKKVREAEELAQKNRQKYKLDTVLFFDEANTTEAIFAIKEVLCDKTVKGYPLKKNSGLKIIAACNPYRRHTTKMVDRLERAGLGYRVKAEETEDRLGKVPMRQLVYRVHPLPPSMVPLVWDFGQLSDSTELSYIRQIVKKKMRDHRLPLSCQNVITNVLAASQKYMRNQADECSFVSLRDVERSMGVLLWFYNHRDIFFPSQDFPRFENVQMVLKCLVLAVGVCYYPSLENKRPYLATISKCFPDQFNSEESLEQEIASCQDFLLKNIQTRETIAKNMALKENVFLMVVCIELRIPLFLVGKPGSSKSLAKTVIADAMQRQASHCDLFKKLKEVHMVSFQCSPHSSPEGIIGTFRNCARFQKDKNLDEYVSVVVLDEIGLAEDSPQMPLKTLHPLLEDGCIDSDNPESYMKVGFVGISNWALDPAKMNRGIFVSRWDPSEKDLVETAEGICSSSQPVLLKIKHLLSKLAKCFLSICKTDSEQFFGLRDYYGLIKMLFDTVKCSDQEPSDKELAEAVLRNFSGQRDGFDPLDYFKDIFQNIQNVQRPNTLNMIEQNLDHHIDKECRYLLLLTTNNAALYIIQHHIFSKENYTQKCPEIVFGSGFPKDQEYAQICRNVSRIKACMETGRTVILLNLLNLYESLYDALNQYYVYFSGQQYVDLGLGSHRVKCRVHRDFRLVVVEDQEKVYKKFPVPLKNRLEKHKVDRSTDLAPWQHRVLEKLKKWAREFSKIQHSDSSEANFSVTDAFVGFHGDACASALLQALKKIDKLHHNKEENREESEAHHIDREFTEFQEKVNKFPDEAQEDDASMEVDKVQDAEIDEEMETLEDDSDLVKMVEGPVFVETRDKIESNKTMDEEEVYEIAKSFLLNCSTPDSVLRLKYSEFGNQETEELQKMYFHLQTHQSLRDLLNNHLNKTNQDKNRFLEVTTFSNLLTGADVRNLGPALGLSTERFLLLSLHQFDTEASFCNKIQSFLRESGPSVHILLIQMDMEESLCKNELIASAKYCTMNEILHLKSDECNIYTVFITKLSRIGEQCTSITGDKYIGFQGGVWLSAHIDDLRDSDDLCLNLKAFCGIPISQLISQTIESDVKESDEMNTNRQQSEKGDSVHLHSLSLLRSCTQKAVSLLRDTDEKTSRSMERMNILLGLLACDPGRTGARFQQVLLKRLVFALIQKEELIPNAKDWVYKVAKNHEALQECGTLRHTLWRYLQDFLTPVLARILEVIDRDCNLYQLYGEGLSEGLTQFWLDIFEDQQLLDLIPSQNTRAPDQEINVQCHLFVGEVEQPCAAPYSWLIKTYCQSLWEESEFVRSSEQDIKARIQQFVSAVSGSRLGSYIQKLSDVENVELGQRYLTDYVLLAFKVNSEDEHWVLQSAVLGCVFTLQTMMSVSPELSPSWIHAAAQIYNPRMDTLSHVLQLNPQLVSLIQQERPKRESPDMCEDILAVGICVEETKLLPVTSLTECLTFLQRVEQLQPCIERVLSPDYSALCSPGCLKYLETIQSVWQGILLVAVFIEKVVIKMKKGDERIIALTLKHCSQLHGLVEGSPDFRSKDNLQQIIRILNDYHEESISSELRYGVKCRVCLMELSEPFALPCEHVFCRSCLRRSMEREEAQHCPVCREPLSNNYQPTVSTTLNYSFALKQHKEIIKCCNTFFLEVVSRFCLTDDQDPPDDLVELLFSLLISAQGDVYKTRELTPFLECVDQSPVVRSVLPKLLMQYSLKQVKKHIQSYLEDLENKLLDKEDRTELYRLFVNCFQDTLLCSDSNGDHKHLRENTNFLSRLARKQTPSRQNDPAEFLMSMARLRMCLDSAAYILSKAICQKNNFVEAEFKFMEQVKAVCDYCDNDWYRVYLLRALNRQAGMDFLQALINSTDYEWIFPAEMMRLHRLIPAEVDRFLCCGQSYRALRDGVGESTQVGTTDGLKEALQASVGSSPLKNALLTLAVFRQVTCHFMSPERTLHPQEQQISILEKVIRDNMSGHAREFCTALLSNHIGGPGSNLRLGTGVPAQRRPVLELLVHACTVFYSGNRLISPLFNIASQPQNMTGAFLPTMPDDHTSEAKQWLSEKKLKMYFCSNSHACFVGECGRPMAKSKCATCGVEIGGEGHIPVPGFTEAYGDYDRTRPGHILGQARTRSEAPNRKLTLAQSCVLRLCLHLAMLQGLIHYQQGIRNMIHPEVSDVYQFLWQHLEKDMEVLGKTLTLNIDDSAIVIHLIFSRFLQTTPVANVDLSTRKSREQWEITVCKTAISPVLQNLDRELNNAQDLIAADNRLSNSPLVKVLRGDPQRMLQLPANCPTEHSAFWSPSSVLAVESISQQIDQAQAPLLTLFVQKVHYIRQLDCLPALAALLSDLIKVLPPGSETQNHTIASLLHCIPAGHQKKLMSERVEIYMKVWNQLRMEISSNASLGLDSTHCEKDITSESSGQFLFPSRKGAGSCLHAVIDVLSETHNSLVREARKLCQQTDSDYKVPLAVLSKSQLALCHPEREFLPLVLANCHYTLEKGQQTVSSYDHQGIERELSRRFFAGKPRIQTDTEKYLRRHHQNFTEVLNEVRAKIPQEMFWNPKQIHQAFSTNYHSTNRHKGLSRFYPDQPLSITTVPDLVIPRRPVGFQTQERHTLTPPGSHLTALNSLPAFSFCAPPISIRSTMELHLEEKDITSFPGLDSLPEELTWAKAAEIWRLAVQFKH</sequence>
<reference key="1">
    <citation type="journal article" date="2013" name="Nature">
        <title>The zebrafish reference genome sequence and its relationship to the human genome.</title>
        <authorList>
            <person name="Howe K."/>
            <person name="Clark M.D."/>
            <person name="Torroja C.F."/>
            <person name="Torrance J."/>
            <person name="Berthelot C."/>
            <person name="Muffato M."/>
            <person name="Collins J.E."/>
            <person name="Humphray S."/>
            <person name="McLaren K."/>
            <person name="Matthews L."/>
            <person name="McLaren S."/>
            <person name="Sealy I."/>
            <person name="Caccamo M."/>
            <person name="Churcher C."/>
            <person name="Scott C."/>
            <person name="Barrett J.C."/>
            <person name="Koch R."/>
            <person name="Rauch G.J."/>
            <person name="White S."/>
            <person name="Chow W."/>
            <person name="Kilian B."/>
            <person name="Quintais L.T."/>
            <person name="Guerra-Assuncao J.A."/>
            <person name="Zhou Y."/>
            <person name="Gu Y."/>
            <person name="Yen J."/>
            <person name="Vogel J.H."/>
            <person name="Eyre T."/>
            <person name="Redmond S."/>
            <person name="Banerjee R."/>
            <person name="Chi J."/>
            <person name="Fu B."/>
            <person name="Langley E."/>
            <person name="Maguire S.F."/>
            <person name="Laird G.K."/>
            <person name="Lloyd D."/>
            <person name="Kenyon E."/>
            <person name="Donaldson S."/>
            <person name="Sehra H."/>
            <person name="Almeida-King J."/>
            <person name="Loveland J."/>
            <person name="Trevanion S."/>
            <person name="Jones M."/>
            <person name="Quail M."/>
            <person name="Willey D."/>
            <person name="Hunt A."/>
            <person name="Burton J."/>
            <person name="Sims S."/>
            <person name="McLay K."/>
            <person name="Plumb B."/>
            <person name="Davis J."/>
            <person name="Clee C."/>
            <person name="Oliver K."/>
            <person name="Clark R."/>
            <person name="Riddle C."/>
            <person name="Elliot D."/>
            <person name="Threadgold G."/>
            <person name="Harden G."/>
            <person name="Ware D."/>
            <person name="Begum S."/>
            <person name="Mortimore B."/>
            <person name="Kerry G."/>
            <person name="Heath P."/>
            <person name="Phillimore B."/>
            <person name="Tracey A."/>
            <person name="Corby N."/>
            <person name="Dunn M."/>
            <person name="Johnson C."/>
            <person name="Wood J."/>
            <person name="Clark S."/>
            <person name="Pelan S."/>
            <person name="Griffiths G."/>
            <person name="Smith M."/>
            <person name="Glithero R."/>
            <person name="Howden P."/>
            <person name="Barker N."/>
            <person name="Lloyd C."/>
            <person name="Stevens C."/>
            <person name="Harley J."/>
            <person name="Holt K."/>
            <person name="Panagiotidis G."/>
            <person name="Lovell J."/>
            <person name="Beasley H."/>
            <person name="Henderson C."/>
            <person name="Gordon D."/>
            <person name="Auger K."/>
            <person name="Wright D."/>
            <person name="Collins J."/>
            <person name="Raisen C."/>
            <person name="Dyer L."/>
            <person name="Leung K."/>
            <person name="Robertson L."/>
            <person name="Ambridge K."/>
            <person name="Leongamornlert D."/>
            <person name="McGuire S."/>
            <person name="Gilderthorp R."/>
            <person name="Griffiths C."/>
            <person name="Manthravadi D."/>
            <person name="Nichol S."/>
            <person name="Barker G."/>
            <person name="Whitehead S."/>
            <person name="Kay M."/>
            <person name="Brown J."/>
            <person name="Murnane C."/>
            <person name="Gray E."/>
            <person name="Humphries M."/>
            <person name="Sycamore N."/>
            <person name="Barker D."/>
            <person name="Saunders D."/>
            <person name="Wallis J."/>
            <person name="Babbage A."/>
            <person name="Hammond S."/>
            <person name="Mashreghi-Mohammadi M."/>
            <person name="Barr L."/>
            <person name="Martin S."/>
            <person name="Wray P."/>
            <person name="Ellington A."/>
            <person name="Matthews N."/>
            <person name="Ellwood M."/>
            <person name="Woodmansey R."/>
            <person name="Clark G."/>
            <person name="Cooper J."/>
            <person name="Tromans A."/>
            <person name="Grafham D."/>
            <person name="Skuce C."/>
            <person name="Pandian R."/>
            <person name="Andrews R."/>
            <person name="Harrison E."/>
            <person name="Kimberley A."/>
            <person name="Garnett J."/>
            <person name="Fosker N."/>
            <person name="Hall R."/>
            <person name="Garner P."/>
            <person name="Kelly D."/>
            <person name="Bird C."/>
            <person name="Palmer S."/>
            <person name="Gehring I."/>
            <person name="Berger A."/>
            <person name="Dooley C.M."/>
            <person name="Ersan-Urun Z."/>
            <person name="Eser C."/>
            <person name="Geiger H."/>
            <person name="Geisler M."/>
            <person name="Karotki L."/>
            <person name="Kirn A."/>
            <person name="Konantz J."/>
            <person name="Konantz M."/>
            <person name="Oberlander M."/>
            <person name="Rudolph-Geiger S."/>
            <person name="Teucke M."/>
            <person name="Lanz C."/>
            <person name="Raddatz G."/>
            <person name="Osoegawa K."/>
            <person name="Zhu B."/>
            <person name="Rapp A."/>
            <person name="Widaa S."/>
            <person name="Langford C."/>
            <person name="Yang F."/>
            <person name="Schuster S.C."/>
            <person name="Carter N.P."/>
            <person name="Harrow J."/>
            <person name="Ning Z."/>
            <person name="Herrero J."/>
            <person name="Searle S.M."/>
            <person name="Enright A."/>
            <person name="Geisler R."/>
            <person name="Plasterk R.H."/>
            <person name="Lee C."/>
            <person name="Westerfield M."/>
            <person name="de Jong P.J."/>
            <person name="Zon L.I."/>
            <person name="Postlethwait J.H."/>
            <person name="Nusslein-Volhard C."/>
            <person name="Hubbard T.J."/>
            <person name="Roest Crollius H."/>
            <person name="Rogers J."/>
            <person name="Stemple D.L."/>
        </authorList>
    </citation>
    <scope>NUCLEOTIDE SEQUENCE [LARGE SCALE GENOMIC DNA]</scope>
    <source>
        <strain>Tuebingen</strain>
    </source>
</reference>
<reference key="2">
    <citation type="journal article" date="2011" name="PLoS ONE">
        <title>Identification of RNF213 as a susceptibility gene for moyamoya disease and its possible role in vascular development.</title>
        <authorList>
            <person name="Liu W."/>
            <person name="Morito D."/>
            <person name="Takashima S."/>
            <person name="Mineharu Y."/>
            <person name="Kobayashi H."/>
            <person name="Hitomi T."/>
            <person name="Hashikata H."/>
            <person name="Matsuura N."/>
            <person name="Yamazaki S."/>
            <person name="Toyoda A."/>
            <person name="Kikuta K."/>
            <person name="Takagi Y."/>
            <person name="Harada K.H."/>
            <person name="Fujiyama A."/>
            <person name="Herzig R."/>
            <person name="Krischek B."/>
            <person name="Zou L."/>
            <person name="Kim J.E."/>
            <person name="Kitakaze M."/>
            <person name="Miyamoto S."/>
            <person name="Nagata K."/>
            <person name="Hashimoto N."/>
            <person name="Koizumi A."/>
        </authorList>
    </citation>
    <scope>DISRUPTION PHENOTYPE</scope>
</reference>
<reference key="3">
    <citation type="journal article" date="2015" name="Sci. Rep.">
        <title>Neuromuscular regulation in zebrafish by a large AAA+ ATPase/ubiquitin ligase, mysterin/RNF213.</title>
        <authorList>
            <person name="Kotani Y."/>
            <person name="Morito D."/>
            <person name="Yamazaki S."/>
            <person name="Ogino K."/>
            <person name="Kawakami K."/>
            <person name="Takashima S."/>
            <person name="Hirata H."/>
            <person name="Nagata K."/>
        </authorList>
    </citation>
    <scope>DISRUPTION PHENOTYPE</scope>
</reference>
<protein>
    <recommendedName>
        <fullName evidence="11">E3 ubiquitin-protein ligase rnf213-beta</fullName>
        <ecNumber evidence="3">2.3.2.27</ecNumber>
        <ecNumber evidence="3">3.6.4.-</ecNumber>
    </recommendedName>
    <alternativeName>
        <fullName evidence="11">E3 ubiquitin-lipopolysaccharide ligase rnf213-beta</fullName>
        <ecNumber evidence="3">2.3.2.-</ecNumber>
    </alternativeName>
    <alternativeName>
        <fullName>Mysterin-B</fullName>
    </alternativeName>
    <alternativeName>
        <fullName evidence="10">Mysterin-beta</fullName>
    </alternativeName>
    <alternativeName>
        <fullName evidence="11">RING finger protein 213-B</fullName>
    </alternativeName>
    <alternativeName>
        <fullName evidence="9">RING finger protein 213-beta</fullName>
    </alternativeName>
</protein>
<feature type="chain" id="PRO_0000435805" description="E3 ubiquitin-protein ligase rnf213-beta">
    <location>
        <begin position="1"/>
        <end position="5061"/>
    </location>
</feature>
<feature type="zinc finger region" description="RING-type" evidence="4">
    <location>
        <begin position="3957"/>
        <end position="3997"/>
    </location>
</feature>
<feature type="zinc finger region" description="RZ-type" evidence="5">
    <location>
        <begin position="4429"/>
        <end position="4501"/>
    </location>
</feature>
<feature type="region of interest" description="Disordered" evidence="6">
    <location>
        <begin position="1"/>
        <end position="334"/>
    </location>
</feature>
<feature type="compositionally biased region" description="Basic residues" evidence="6">
    <location>
        <begin position="1"/>
        <end position="12"/>
    </location>
</feature>
<feature type="compositionally biased region" description="Polar residues" evidence="6">
    <location>
        <begin position="24"/>
        <end position="52"/>
    </location>
</feature>
<feature type="compositionally biased region" description="Polar residues" evidence="6">
    <location>
        <begin position="75"/>
        <end position="87"/>
    </location>
</feature>
<feature type="compositionally biased region" description="Basic residues" evidence="6">
    <location>
        <begin position="100"/>
        <end position="110"/>
    </location>
</feature>
<feature type="compositionally biased region" description="Polar residues" evidence="6">
    <location>
        <begin position="127"/>
        <end position="163"/>
    </location>
</feature>
<feature type="compositionally biased region" description="Polar residues" evidence="6">
    <location>
        <begin position="172"/>
        <end position="200"/>
    </location>
</feature>
<feature type="compositionally biased region" description="Basic and acidic residues" evidence="6">
    <location>
        <begin position="217"/>
        <end position="229"/>
    </location>
</feature>
<feature type="compositionally biased region" description="Basic and acidic residues" evidence="6">
    <location>
        <begin position="236"/>
        <end position="289"/>
    </location>
</feature>
<feature type="compositionally biased region" description="Low complexity" evidence="6">
    <location>
        <begin position="292"/>
        <end position="301"/>
    </location>
</feature>
<feature type="compositionally biased region" description="Polar residues" evidence="6">
    <location>
        <begin position="306"/>
        <end position="322"/>
    </location>
</feature>
<feature type="active site" description="Nucleophile; for E3 ubiquitin-lipopolysaccharide ligase activity" evidence="5">
    <location>
        <position position="4462"/>
    </location>
</feature>
<feature type="binding site" evidence="2">
    <location>
        <begin position="1923"/>
        <end position="1928"/>
    </location>
    <ligand>
        <name>ATP</name>
        <dbReference type="ChEBI" id="CHEBI:30616"/>
    </ligand>
</feature>
<feature type="binding site" evidence="2">
    <location>
        <position position="2023"/>
    </location>
    <ligand>
        <name>ATP</name>
        <dbReference type="ChEBI" id="CHEBI:30616"/>
    </ligand>
</feature>
<feature type="binding site" evidence="2">
    <location>
        <position position="2074"/>
    </location>
    <ligand>
        <name>ATP</name>
        <dbReference type="ChEBI" id="CHEBI:30616"/>
    </ligand>
</feature>
<feature type="binding site" evidence="2">
    <location>
        <position position="2417"/>
    </location>
    <ligand>
        <name>ATP</name>
        <dbReference type="ChEBI" id="CHEBI:30616"/>
    </ligand>
</feature>
<feature type="binding site" evidence="2">
    <location>
        <position position="2492"/>
    </location>
    <ligand>
        <name>ATP</name>
        <dbReference type="ChEBI" id="CHEBI:30616"/>
    </ligand>
</feature>
<feature type="binding site" evidence="2">
    <location>
        <position position="3957"/>
    </location>
    <ligand>
        <name>Zn(2+)</name>
        <dbReference type="ChEBI" id="CHEBI:29105"/>
        <label>1</label>
    </ligand>
</feature>
<feature type="binding site" evidence="2">
    <location>
        <position position="3960"/>
    </location>
    <ligand>
        <name>Zn(2+)</name>
        <dbReference type="ChEBI" id="CHEBI:29105"/>
        <label>1</label>
    </ligand>
</feature>
<feature type="binding site" evidence="2">
    <location>
        <position position="3972"/>
    </location>
    <ligand>
        <name>Zn(2+)</name>
        <dbReference type="ChEBI" id="CHEBI:29105"/>
        <label>2</label>
    </ligand>
</feature>
<feature type="binding site" evidence="2">
    <location>
        <position position="3974"/>
    </location>
    <ligand>
        <name>Zn(2+)</name>
        <dbReference type="ChEBI" id="CHEBI:29105"/>
        <label>2</label>
    </ligand>
</feature>
<feature type="binding site" evidence="2">
    <location>
        <position position="3977"/>
    </location>
    <ligand>
        <name>Zn(2+)</name>
        <dbReference type="ChEBI" id="CHEBI:29105"/>
        <label>1</label>
    </ligand>
</feature>
<feature type="binding site" evidence="2">
    <location>
        <position position="3980"/>
    </location>
    <ligand>
        <name>Zn(2+)</name>
        <dbReference type="ChEBI" id="CHEBI:29105"/>
        <label>1</label>
    </ligand>
</feature>
<feature type="binding site" evidence="2">
    <location>
        <position position="3993"/>
    </location>
    <ligand>
        <name>Zn(2+)</name>
        <dbReference type="ChEBI" id="CHEBI:29105"/>
        <label>2</label>
    </ligand>
</feature>
<feature type="binding site" evidence="2">
    <location>
        <position position="3996"/>
    </location>
    <ligand>
        <name>Zn(2+)</name>
        <dbReference type="ChEBI" id="CHEBI:29105"/>
        <label>2</label>
    </ligand>
</feature>
<feature type="binding site" evidence="5">
    <location>
        <position position="4451"/>
    </location>
    <ligand>
        <name>Zn(2+)</name>
        <dbReference type="ChEBI" id="CHEBI:29105"/>
        <label>3</label>
    </ligand>
</feature>
<feature type="binding site" evidence="5">
    <location>
        <position position="4455"/>
    </location>
    <ligand>
        <name>Zn(2+)</name>
        <dbReference type="ChEBI" id="CHEBI:29105"/>
        <label>3</label>
    </ligand>
</feature>
<feature type="binding site" evidence="5">
    <location>
        <position position="4471"/>
    </location>
    <ligand>
        <name>Zn(2+)</name>
        <dbReference type="ChEBI" id="CHEBI:29105"/>
        <label>3</label>
    </ligand>
</feature>
<feature type="binding site" evidence="5">
    <location>
        <position position="4474"/>
    </location>
    <ligand>
        <name>Zn(2+)</name>
        <dbReference type="ChEBI" id="CHEBI:29105"/>
        <label>3</label>
    </ligand>
</feature>
<accession>A0A0R4I9Y1</accession>
<keyword id="KW-0037">Angiogenesis</keyword>
<keyword id="KW-0067">ATP-binding</keyword>
<keyword id="KW-0963">Cytoplasm</keyword>
<keyword id="KW-0378">Hydrolase</keyword>
<keyword id="KW-0391">Immunity</keyword>
<keyword id="KW-0551">Lipid droplet</keyword>
<keyword id="KW-0443">Lipid metabolism</keyword>
<keyword id="KW-0479">Metal-binding</keyword>
<keyword id="KW-0511">Multifunctional enzyme</keyword>
<keyword id="KW-0547">Nucleotide-binding</keyword>
<keyword id="KW-1185">Reference proteome</keyword>
<keyword id="KW-0808">Transferase</keyword>
<keyword id="KW-0833">Ubl conjugation pathway</keyword>
<keyword id="KW-0862">Zinc</keyword>
<keyword id="KW-0863">Zinc-finger</keyword>
<dbReference type="EC" id="2.3.2.27" evidence="3"/>
<dbReference type="EC" id="3.6.4.-" evidence="3"/>
<dbReference type="EC" id="2.3.2.-" evidence="3"/>
<dbReference type="EMBL" id="CU459056">
    <property type="status" value="NOT_ANNOTATED_CDS"/>
    <property type="molecule type" value="Genomic_DNA"/>
</dbReference>
<dbReference type="SMR" id="A0A0R4I9Y1"/>
<dbReference type="STRING" id="7955.ENSDARP00000130736"/>
<dbReference type="PaxDb" id="7955-ENSDARP00000127221"/>
<dbReference type="eggNOG" id="ENOG502QQ65">
    <property type="taxonomic scope" value="Eukaryota"/>
</dbReference>
<dbReference type="InParanoid" id="A0A0R4I9Y1"/>
<dbReference type="UniPathway" id="UPA00143"/>
<dbReference type="Proteomes" id="UP000000437">
    <property type="component" value="Unplaced"/>
</dbReference>
<dbReference type="GO" id="GO:0005829">
    <property type="term" value="C:cytosol"/>
    <property type="evidence" value="ECO:0000250"/>
    <property type="project" value="UniProtKB"/>
</dbReference>
<dbReference type="GO" id="GO:0005811">
    <property type="term" value="C:lipid droplet"/>
    <property type="evidence" value="ECO:0000250"/>
    <property type="project" value="UniProtKB"/>
</dbReference>
<dbReference type="GO" id="GO:0005524">
    <property type="term" value="F:ATP binding"/>
    <property type="evidence" value="ECO:0007669"/>
    <property type="project" value="UniProtKB-KW"/>
</dbReference>
<dbReference type="GO" id="GO:0016887">
    <property type="term" value="F:ATP hydrolysis activity"/>
    <property type="evidence" value="ECO:0007669"/>
    <property type="project" value="InterPro"/>
</dbReference>
<dbReference type="GO" id="GO:0061630">
    <property type="term" value="F:ubiquitin protein ligase activity"/>
    <property type="evidence" value="ECO:0000250"/>
    <property type="project" value="UniProtKB"/>
</dbReference>
<dbReference type="GO" id="GO:0008270">
    <property type="term" value="F:zinc ion binding"/>
    <property type="evidence" value="ECO:0007669"/>
    <property type="project" value="UniProtKB-KW"/>
</dbReference>
<dbReference type="GO" id="GO:0001525">
    <property type="term" value="P:angiogenesis"/>
    <property type="evidence" value="ECO:0007669"/>
    <property type="project" value="UniProtKB-KW"/>
</dbReference>
<dbReference type="GO" id="GO:0042742">
    <property type="term" value="P:defense response to bacterium"/>
    <property type="evidence" value="ECO:0000250"/>
    <property type="project" value="UniProtKB"/>
</dbReference>
<dbReference type="GO" id="GO:0002376">
    <property type="term" value="P:immune system process"/>
    <property type="evidence" value="ECO:0007669"/>
    <property type="project" value="UniProtKB-KW"/>
</dbReference>
<dbReference type="GO" id="GO:0140042">
    <property type="term" value="P:lipid droplet formation"/>
    <property type="evidence" value="ECO:0000250"/>
    <property type="project" value="UniProtKB"/>
</dbReference>
<dbReference type="GO" id="GO:0120323">
    <property type="term" value="P:lipid ubiquitination"/>
    <property type="evidence" value="ECO:0000250"/>
    <property type="project" value="UniProtKB"/>
</dbReference>
<dbReference type="GO" id="GO:0070534">
    <property type="term" value="P:protein K63-linked ubiquitination"/>
    <property type="evidence" value="ECO:0000250"/>
    <property type="project" value="UniProtKB"/>
</dbReference>
<dbReference type="GO" id="GO:0019216">
    <property type="term" value="P:regulation of lipid metabolic process"/>
    <property type="evidence" value="ECO:0000250"/>
    <property type="project" value="UniProtKB"/>
</dbReference>
<dbReference type="GO" id="GO:0098792">
    <property type="term" value="P:xenophagy"/>
    <property type="evidence" value="ECO:0000250"/>
    <property type="project" value="UniProtKB"/>
</dbReference>
<dbReference type="FunFam" id="3.40.50.300:FF:000491">
    <property type="entry name" value="E3 ubiquitin-protein ligase RNF213"/>
    <property type="match status" value="1"/>
</dbReference>
<dbReference type="FunFam" id="3.40.50.300:FF:000804">
    <property type="entry name" value="E3 ubiquitin-protein ligase RNF213"/>
    <property type="match status" value="1"/>
</dbReference>
<dbReference type="Gene3D" id="3.40.50.300">
    <property type="entry name" value="P-loop containing nucleotide triphosphate hydrolases"/>
    <property type="match status" value="2"/>
</dbReference>
<dbReference type="Gene3D" id="3.30.40.10">
    <property type="entry name" value="Zinc/RING finger domain, C3HC4 (zinc finger)"/>
    <property type="match status" value="1"/>
</dbReference>
<dbReference type="InterPro" id="IPR003593">
    <property type="entry name" value="AAA+_ATPase"/>
</dbReference>
<dbReference type="InterPro" id="IPR027417">
    <property type="entry name" value="P-loop_NTPase"/>
</dbReference>
<dbReference type="InterPro" id="IPR031248">
    <property type="entry name" value="RNF213"/>
</dbReference>
<dbReference type="InterPro" id="IPR046439">
    <property type="entry name" value="ZF_RZ_dom"/>
</dbReference>
<dbReference type="InterPro" id="IPR001841">
    <property type="entry name" value="Znf_RING"/>
</dbReference>
<dbReference type="InterPro" id="IPR013083">
    <property type="entry name" value="Znf_RING/FYVE/PHD"/>
</dbReference>
<dbReference type="InterPro" id="IPR017907">
    <property type="entry name" value="Znf_RING_CS"/>
</dbReference>
<dbReference type="PANTHER" id="PTHR22605:SF21">
    <property type="entry name" value="E3 UBIQUITIN-PROTEIN LIGASE RNF213-BETA"/>
    <property type="match status" value="1"/>
</dbReference>
<dbReference type="PANTHER" id="PTHR22605">
    <property type="entry name" value="RZ-TYPE DOMAIN-CONTAINING PROTEIN"/>
    <property type="match status" value="1"/>
</dbReference>
<dbReference type="Pfam" id="PF13923">
    <property type="entry name" value="zf-C3HC4_2"/>
    <property type="match status" value="1"/>
</dbReference>
<dbReference type="Pfam" id="PF20173">
    <property type="entry name" value="ZnF_RZ-type"/>
    <property type="match status" value="1"/>
</dbReference>
<dbReference type="SMART" id="SM00382">
    <property type="entry name" value="AAA"/>
    <property type="match status" value="2"/>
</dbReference>
<dbReference type="SMART" id="SM00184">
    <property type="entry name" value="RING"/>
    <property type="match status" value="1"/>
</dbReference>
<dbReference type="SUPFAM" id="SSF52540">
    <property type="entry name" value="P-loop containing nucleoside triphosphate hydrolases"/>
    <property type="match status" value="2"/>
</dbReference>
<dbReference type="SUPFAM" id="SSF57850">
    <property type="entry name" value="RING/U-box"/>
    <property type="match status" value="1"/>
</dbReference>
<dbReference type="PROSITE" id="PS00518">
    <property type="entry name" value="ZF_RING_1"/>
    <property type="match status" value="1"/>
</dbReference>
<dbReference type="PROSITE" id="PS50089">
    <property type="entry name" value="ZF_RING_2"/>
    <property type="match status" value="1"/>
</dbReference>
<dbReference type="PROSITE" id="PS51981">
    <property type="entry name" value="ZF_RZ"/>
    <property type="match status" value="1"/>
</dbReference>